<proteinExistence type="inferred from homology"/>
<organism>
    <name type="scientific">Chlamydia felis (strain Fe/C-56)</name>
    <name type="common">Chlamydophila felis</name>
    <dbReference type="NCBI Taxonomy" id="264202"/>
    <lineage>
        <taxon>Bacteria</taxon>
        <taxon>Pseudomonadati</taxon>
        <taxon>Chlamydiota</taxon>
        <taxon>Chlamydiia</taxon>
        <taxon>Chlamydiales</taxon>
        <taxon>Chlamydiaceae</taxon>
        <taxon>Chlamydia/Chlamydophila group</taxon>
        <taxon>Chlamydia</taxon>
    </lineage>
</organism>
<name>RL34_CHLFF</name>
<comment type="similarity">
    <text evidence="1">Belongs to the bacterial ribosomal protein bL34 family.</text>
</comment>
<evidence type="ECO:0000255" key="1">
    <source>
        <dbReference type="HAMAP-Rule" id="MF_00391"/>
    </source>
</evidence>
<evidence type="ECO:0000256" key="2">
    <source>
        <dbReference type="SAM" id="MobiDB-lite"/>
    </source>
</evidence>
<evidence type="ECO:0000305" key="3"/>
<gene>
    <name evidence="1" type="primary">rpmH</name>
    <name type="ordered locus">CF0179</name>
</gene>
<reference key="1">
    <citation type="journal article" date="2006" name="DNA Res.">
        <title>Genome sequence of the cat pathogen, Chlamydophila felis.</title>
        <authorList>
            <person name="Azuma Y."/>
            <person name="Hirakawa H."/>
            <person name="Yamashita A."/>
            <person name="Cai Y."/>
            <person name="Rahman M.A."/>
            <person name="Suzuki H."/>
            <person name="Mitaku S."/>
            <person name="Toh H."/>
            <person name="Goto S."/>
            <person name="Murakami T."/>
            <person name="Sugi K."/>
            <person name="Hayashi H."/>
            <person name="Fukushi H."/>
            <person name="Hattori M."/>
            <person name="Kuhara S."/>
            <person name="Shirai M."/>
        </authorList>
    </citation>
    <scope>NUCLEOTIDE SEQUENCE [LARGE SCALE GENOMIC DNA]</scope>
    <source>
        <strain>Fe/C-56</strain>
    </source>
</reference>
<keyword id="KW-0687">Ribonucleoprotein</keyword>
<keyword id="KW-0689">Ribosomal protein</keyword>
<dbReference type="EMBL" id="AP006861">
    <property type="protein sequence ID" value="BAE80951.1"/>
    <property type="molecule type" value="Genomic_DNA"/>
</dbReference>
<dbReference type="RefSeq" id="WP_011457736.1">
    <property type="nucleotide sequence ID" value="NC_007899.1"/>
</dbReference>
<dbReference type="SMR" id="Q255T7"/>
<dbReference type="STRING" id="264202.CF0179"/>
<dbReference type="KEGG" id="cfe:CF0179"/>
<dbReference type="eggNOG" id="COG0230">
    <property type="taxonomic scope" value="Bacteria"/>
</dbReference>
<dbReference type="HOGENOM" id="CLU_129938_2_1_0"/>
<dbReference type="Proteomes" id="UP000001260">
    <property type="component" value="Chromosome"/>
</dbReference>
<dbReference type="GO" id="GO:1990904">
    <property type="term" value="C:ribonucleoprotein complex"/>
    <property type="evidence" value="ECO:0007669"/>
    <property type="project" value="UniProtKB-KW"/>
</dbReference>
<dbReference type="GO" id="GO:0005840">
    <property type="term" value="C:ribosome"/>
    <property type="evidence" value="ECO:0007669"/>
    <property type="project" value="UniProtKB-KW"/>
</dbReference>
<dbReference type="GO" id="GO:0003735">
    <property type="term" value="F:structural constituent of ribosome"/>
    <property type="evidence" value="ECO:0007669"/>
    <property type="project" value="InterPro"/>
</dbReference>
<dbReference type="GO" id="GO:0006412">
    <property type="term" value="P:translation"/>
    <property type="evidence" value="ECO:0007669"/>
    <property type="project" value="UniProtKB-UniRule"/>
</dbReference>
<dbReference type="FunFam" id="1.10.287.3980:FF:000001">
    <property type="entry name" value="Mitochondrial ribosomal protein L34"/>
    <property type="match status" value="1"/>
</dbReference>
<dbReference type="Gene3D" id="1.10.287.3980">
    <property type="match status" value="1"/>
</dbReference>
<dbReference type="HAMAP" id="MF_00391">
    <property type="entry name" value="Ribosomal_bL34"/>
    <property type="match status" value="1"/>
</dbReference>
<dbReference type="InterPro" id="IPR000271">
    <property type="entry name" value="Ribosomal_bL34"/>
</dbReference>
<dbReference type="InterPro" id="IPR020939">
    <property type="entry name" value="Ribosomal_bL34_CS"/>
</dbReference>
<dbReference type="NCBIfam" id="TIGR01030">
    <property type="entry name" value="rpmH_bact"/>
    <property type="match status" value="1"/>
</dbReference>
<dbReference type="PANTHER" id="PTHR14503:SF4">
    <property type="entry name" value="LARGE RIBOSOMAL SUBUNIT PROTEIN BL34M"/>
    <property type="match status" value="1"/>
</dbReference>
<dbReference type="PANTHER" id="PTHR14503">
    <property type="entry name" value="MITOCHONDRIAL RIBOSOMAL PROTEIN 34 FAMILY MEMBER"/>
    <property type="match status" value="1"/>
</dbReference>
<dbReference type="Pfam" id="PF00468">
    <property type="entry name" value="Ribosomal_L34"/>
    <property type="match status" value="1"/>
</dbReference>
<dbReference type="PROSITE" id="PS00784">
    <property type="entry name" value="RIBOSOMAL_L34"/>
    <property type="match status" value="1"/>
</dbReference>
<sequence length="45" mass="5490">MKRTYQPSKRKRRNSVGFRARMATKSGRNLLNRRRRHGRHNLIDL</sequence>
<feature type="chain" id="PRO_1000013313" description="Large ribosomal subunit protein bL34">
    <location>
        <begin position="1"/>
        <end position="45"/>
    </location>
</feature>
<feature type="region of interest" description="Disordered" evidence="2">
    <location>
        <begin position="1"/>
        <end position="45"/>
    </location>
</feature>
<feature type="compositionally biased region" description="Basic residues" evidence="2">
    <location>
        <begin position="1"/>
        <end position="14"/>
    </location>
</feature>
<feature type="compositionally biased region" description="Basic residues" evidence="2">
    <location>
        <begin position="31"/>
        <end position="45"/>
    </location>
</feature>
<accession>Q255T7</accession>
<protein>
    <recommendedName>
        <fullName evidence="1">Large ribosomal subunit protein bL34</fullName>
    </recommendedName>
    <alternativeName>
        <fullName evidence="3">50S ribosomal protein L34</fullName>
    </alternativeName>
</protein>